<evidence type="ECO:0000255" key="1">
    <source>
        <dbReference type="HAMAP-Rule" id="MF_00150"/>
    </source>
</evidence>
<protein>
    <recommendedName>
        <fullName evidence="1">N-acetyl-gamma-glutamyl-phosphate reductase</fullName>
        <shortName evidence="1">AGPR</shortName>
        <ecNumber evidence="1">1.2.1.38</ecNumber>
    </recommendedName>
    <alternativeName>
        <fullName evidence="1">N-acetyl-glutamate semialdehyde dehydrogenase</fullName>
        <shortName evidence="1">NAGSA dehydrogenase</shortName>
    </alternativeName>
</protein>
<sequence>MSKKIKAGIVGATGYTGVELLRLLAAHPDVEVAAVTSRSEAGTAVADYFPSLRGVYGLAFQTPDEAGLEQCDIVFFATPNGIAMKDAPRLLEQGVRVIDLSADFRIRDIPTWEHWYGMTHAAPGLVSQAVYGLSELNREAVAQARLVANPGCYPTCVSLPLVPLLRQCRLKPGMPLIADCKSGVSGAGRKGNVGSLLCEAGDNFKAYGTAGHRHLPEIRQTIAGLQDGIAEGFVFTPHLAPMIRGMHATVYLHLSDGSDPETVLRDYYRDSPFMDILPAGSTPETRSVRGANLCRISIRQAAQSDVWVVLSVIDNLVKGAAGQAVQNMNIMFGLEETHGLDAIPLLP</sequence>
<feature type="chain" id="PRO_0000112426" description="N-acetyl-gamma-glutamyl-phosphate reductase">
    <location>
        <begin position="1"/>
        <end position="347"/>
    </location>
</feature>
<feature type="active site" evidence="1">
    <location>
        <position position="152"/>
    </location>
</feature>
<dbReference type="EC" id="1.2.1.38" evidence="1"/>
<dbReference type="EMBL" id="AE004969">
    <property type="protein sequence ID" value="AAW88878.1"/>
    <property type="molecule type" value="Genomic_DNA"/>
</dbReference>
<dbReference type="RefSeq" id="WP_010950995.1">
    <property type="nucleotide sequence ID" value="NC_002946.2"/>
</dbReference>
<dbReference type="RefSeq" id="YP_207290.1">
    <property type="nucleotide sequence ID" value="NC_002946.2"/>
</dbReference>
<dbReference type="SMR" id="Q5FAA9"/>
<dbReference type="STRING" id="242231.NGO_0118"/>
<dbReference type="KEGG" id="ngo:NGO_0118"/>
<dbReference type="PATRIC" id="fig|242231.10.peg.153"/>
<dbReference type="HOGENOM" id="CLU_006384_0_1_4"/>
<dbReference type="UniPathway" id="UPA00068">
    <property type="reaction ID" value="UER00108"/>
</dbReference>
<dbReference type="Proteomes" id="UP000000535">
    <property type="component" value="Chromosome"/>
</dbReference>
<dbReference type="GO" id="GO:0005737">
    <property type="term" value="C:cytoplasm"/>
    <property type="evidence" value="ECO:0007669"/>
    <property type="project" value="UniProtKB-SubCell"/>
</dbReference>
<dbReference type="GO" id="GO:0003942">
    <property type="term" value="F:N-acetyl-gamma-glutamyl-phosphate reductase activity"/>
    <property type="evidence" value="ECO:0007669"/>
    <property type="project" value="UniProtKB-UniRule"/>
</dbReference>
<dbReference type="GO" id="GO:0051287">
    <property type="term" value="F:NAD binding"/>
    <property type="evidence" value="ECO:0007669"/>
    <property type="project" value="InterPro"/>
</dbReference>
<dbReference type="GO" id="GO:0070401">
    <property type="term" value="F:NADP+ binding"/>
    <property type="evidence" value="ECO:0007669"/>
    <property type="project" value="InterPro"/>
</dbReference>
<dbReference type="GO" id="GO:0006526">
    <property type="term" value="P:L-arginine biosynthetic process"/>
    <property type="evidence" value="ECO:0007669"/>
    <property type="project" value="UniProtKB-UniRule"/>
</dbReference>
<dbReference type="CDD" id="cd23934">
    <property type="entry name" value="AGPR_1_C"/>
    <property type="match status" value="1"/>
</dbReference>
<dbReference type="CDD" id="cd17895">
    <property type="entry name" value="AGPR_1_N"/>
    <property type="match status" value="1"/>
</dbReference>
<dbReference type="Gene3D" id="3.30.360.10">
    <property type="entry name" value="Dihydrodipicolinate Reductase, domain 2"/>
    <property type="match status" value="1"/>
</dbReference>
<dbReference type="Gene3D" id="3.40.50.720">
    <property type="entry name" value="NAD(P)-binding Rossmann-like Domain"/>
    <property type="match status" value="1"/>
</dbReference>
<dbReference type="HAMAP" id="MF_00150">
    <property type="entry name" value="ArgC_type1"/>
    <property type="match status" value="1"/>
</dbReference>
<dbReference type="InterPro" id="IPR023013">
    <property type="entry name" value="AGPR_AS"/>
</dbReference>
<dbReference type="InterPro" id="IPR000706">
    <property type="entry name" value="AGPR_type-1"/>
</dbReference>
<dbReference type="InterPro" id="IPR036291">
    <property type="entry name" value="NAD(P)-bd_dom_sf"/>
</dbReference>
<dbReference type="InterPro" id="IPR050085">
    <property type="entry name" value="NAGSA_dehydrogenase"/>
</dbReference>
<dbReference type="InterPro" id="IPR000534">
    <property type="entry name" value="Semialdehyde_DH_NAD-bd"/>
</dbReference>
<dbReference type="NCBIfam" id="TIGR01850">
    <property type="entry name" value="argC"/>
    <property type="match status" value="1"/>
</dbReference>
<dbReference type="PANTHER" id="PTHR32338:SF10">
    <property type="entry name" value="N-ACETYL-GAMMA-GLUTAMYL-PHOSPHATE REDUCTASE, CHLOROPLASTIC-RELATED"/>
    <property type="match status" value="1"/>
</dbReference>
<dbReference type="PANTHER" id="PTHR32338">
    <property type="entry name" value="N-ACETYL-GAMMA-GLUTAMYL-PHOSPHATE REDUCTASE, CHLOROPLASTIC-RELATED-RELATED"/>
    <property type="match status" value="1"/>
</dbReference>
<dbReference type="Pfam" id="PF01118">
    <property type="entry name" value="Semialdhyde_dh"/>
    <property type="match status" value="1"/>
</dbReference>
<dbReference type="Pfam" id="PF22698">
    <property type="entry name" value="Semialdhyde_dhC_1"/>
    <property type="match status" value="1"/>
</dbReference>
<dbReference type="SMART" id="SM00859">
    <property type="entry name" value="Semialdhyde_dh"/>
    <property type="match status" value="1"/>
</dbReference>
<dbReference type="SUPFAM" id="SSF55347">
    <property type="entry name" value="Glyceraldehyde-3-phosphate dehydrogenase-like, C-terminal domain"/>
    <property type="match status" value="1"/>
</dbReference>
<dbReference type="SUPFAM" id="SSF51735">
    <property type="entry name" value="NAD(P)-binding Rossmann-fold domains"/>
    <property type="match status" value="1"/>
</dbReference>
<dbReference type="PROSITE" id="PS01224">
    <property type="entry name" value="ARGC"/>
    <property type="match status" value="1"/>
</dbReference>
<proteinExistence type="inferred from homology"/>
<comment type="function">
    <text evidence="1">Catalyzes the NADPH-dependent reduction of N-acetyl-5-glutamyl phosphate to yield N-acetyl-L-glutamate 5-semialdehyde.</text>
</comment>
<comment type="catalytic activity">
    <reaction evidence="1">
        <text>N-acetyl-L-glutamate 5-semialdehyde + phosphate + NADP(+) = N-acetyl-L-glutamyl 5-phosphate + NADPH + H(+)</text>
        <dbReference type="Rhea" id="RHEA:21588"/>
        <dbReference type="ChEBI" id="CHEBI:15378"/>
        <dbReference type="ChEBI" id="CHEBI:29123"/>
        <dbReference type="ChEBI" id="CHEBI:43474"/>
        <dbReference type="ChEBI" id="CHEBI:57783"/>
        <dbReference type="ChEBI" id="CHEBI:57936"/>
        <dbReference type="ChEBI" id="CHEBI:58349"/>
        <dbReference type="EC" id="1.2.1.38"/>
    </reaction>
</comment>
<comment type="pathway">
    <text evidence="1">Amino-acid biosynthesis; L-arginine biosynthesis; N(2)-acetyl-L-ornithine from L-glutamate: step 3/4.</text>
</comment>
<comment type="subcellular location">
    <subcellularLocation>
        <location evidence="1">Cytoplasm</location>
    </subcellularLocation>
</comment>
<comment type="similarity">
    <text evidence="1">Belongs to the NAGSA dehydrogenase family. Type 1 subfamily.</text>
</comment>
<organism>
    <name type="scientific">Neisseria gonorrhoeae (strain ATCC 700825 / FA 1090)</name>
    <dbReference type="NCBI Taxonomy" id="242231"/>
    <lineage>
        <taxon>Bacteria</taxon>
        <taxon>Pseudomonadati</taxon>
        <taxon>Pseudomonadota</taxon>
        <taxon>Betaproteobacteria</taxon>
        <taxon>Neisseriales</taxon>
        <taxon>Neisseriaceae</taxon>
        <taxon>Neisseria</taxon>
    </lineage>
</organism>
<keyword id="KW-0028">Amino-acid biosynthesis</keyword>
<keyword id="KW-0055">Arginine biosynthesis</keyword>
<keyword id="KW-0963">Cytoplasm</keyword>
<keyword id="KW-0521">NADP</keyword>
<keyword id="KW-0560">Oxidoreductase</keyword>
<keyword id="KW-1185">Reference proteome</keyword>
<accession>Q5FAA9</accession>
<name>ARGC_NEIG1</name>
<reference key="1">
    <citation type="submission" date="2003-03" db="EMBL/GenBank/DDBJ databases">
        <title>The complete genome sequence of Neisseria gonorrhoeae.</title>
        <authorList>
            <person name="Lewis L.A."/>
            <person name="Gillaspy A.F."/>
            <person name="McLaughlin R.E."/>
            <person name="Gipson M."/>
            <person name="Ducey T.F."/>
            <person name="Ownbey T."/>
            <person name="Hartman K."/>
            <person name="Nydick C."/>
            <person name="Carson M.B."/>
            <person name="Vaughn J."/>
            <person name="Thomson C."/>
            <person name="Song L."/>
            <person name="Lin S."/>
            <person name="Yuan X."/>
            <person name="Najar F."/>
            <person name="Zhan M."/>
            <person name="Ren Q."/>
            <person name="Zhu H."/>
            <person name="Qi S."/>
            <person name="Kenton S.M."/>
            <person name="Lai H."/>
            <person name="White J.D."/>
            <person name="Clifton S."/>
            <person name="Roe B.A."/>
            <person name="Dyer D.W."/>
        </authorList>
    </citation>
    <scope>NUCLEOTIDE SEQUENCE [LARGE SCALE GENOMIC DNA]</scope>
    <source>
        <strain>ATCC 700825 / FA 1090</strain>
    </source>
</reference>
<gene>
    <name evidence="1" type="primary">argC</name>
    <name type="ordered locus">NGO_0118</name>
</gene>